<reference key="1">
    <citation type="journal article" date="1991" name="Plant Mol. Biol.">
        <title>Nucleotide sequence of psbB from Prochlorothrix hollandica.</title>
        <authorList>
            <person name="Greer K.L."/>
            <person name="Golden S.S."/>
        </authorList>
    </citation>
    <scope>NUCLEOTIDE SEQUENCE [GENOMIC DNA]</scope>
</reference>
<keyword id="KW-0148">Chlorophyll</keyword>
<keyword id="KW-0157">Chromophore</keyword>
<keyword id="KW-0472">Membrane</keyword>
<keyword id="KW-0602">Photosynthesis</keyword>
<keyword id="KW-0604">Photosystem II</keyword>
<keyword id="KW-0793">Thylakoid</keyword>
<keyword id="KW-0812">Transmembrane</keyword>
<keyword id="KW-1133">Transmembrane helix</keyword>
<accession>P27200</accession>
<proteinExistence type="inferred from homology"/>
<organism>
    <name type="scientific">Prochlorothrix hollandica</name>
    <dbReference type="NCBI Taxonomy" id="1223"/>
    <lineage>
        <taxon>Bacteria</taxon>
        <taxon>Bacillati</taxon>
        <taxon>Cyanobacteriota</taxon>
        <taxon>Cyanophyceae</taxon>
        <taxon>Prochlorotrichales</taxon>
        <taxon>Prochlorotrichaceae</taxon>
        <taxon>Prochlorothrix</taxon>
    </lineage>
</organism>
<comment type="function">
    <text evidence="1">One of the components of the core complex of photosystem II (PSII). It binds chlorophyll and helps catalyze the primary light-induced photochemical processes of PSII. PSII is a light-driven water:plastoquinone oxidoreductase, using light energy to abstract electrons from H(2)O, generating O(2) and a proton gradient subsequently used for ATP formation.</text>
</comment>
<comment type="cofactor">
    <text evidence="1">Binds multiple chlorophylls. PSII binds additional chlorophylls, carotenoids and specific lipids.</text>
</comment>
<comment type="subunit">
    <text evidence="1">PSII is composed of 1 copy each of membrane proteins PsbA, PsbB, PsbC, PsbD, PsbE, PsbF, PsbH, PsbI, PsbJ, PsbK, PsbL, PsbM, PsbT, PsbX, PsbY, PsbZ, Psb30/Ycf12, peripheral proteins PsbO, CyanoQ (PsbQ), PsbU, PsbV and a large number of cofactors. It forms dimeric complexes.</text>
</comment>
<comment type="subcellular location">
    <subcellularLocation>
        <location evidence="1">Cellular thylakoid membrane</location>
        <topology evidence="1">Multi-pass membrane protein</topology>
    </subcellularLocation>
</comment>
<comment type="similarity">
    <text evidence="1">Belongs to the PsbB/PsbC family. PsbB subfamily.</text>
</comment>
<feature type="chain" id="PRO_0000077502" description="Photosystem II CP47 reaction center protein">
    <location>
        <begin position="1"/>
        <end position="514"/>
    </location>
</feature>
<feature type="transmembrane region" description="Helical" evidence="1">
    <location>
        <begin position="21"/>
        <end position="36"/>
    </location>
</feature>
<feature type="transmembrane region" description="Helical" evidence="1">
    <location>
        <begin position="109"/>
        <end position="123"/>
    </location>
</feature>
<feature type="transmembrane region" description="Helical" evidence="1">
    <location>
        <begin position="148"/>
        <end position="164"/>
    </location>
</feature>
<feature type="transmembrane region" description="Helical" evidence="1">
    <location>
        <begin position="211"/>
        <end position="226"/>
    </location>
</feature>
<feature type="transmembrane region" description="Helical" evidence="1">
    <location>
        <begin position="245"/>
        <end position="260"/>
    </location>
</feature>
<feature type="transmembrane region" description="Helical" evidence="1">
    <location>
        <begin position="465"/>
        <end position="480"/>
    </location>
</feature>
<protein>
    <recommendedName>
        <fullName evidence="1">Photosystem II CP47 reaction center protein</fullName>
    </recommendedName>
    <alternativeName>
        <fullName evidence="1">PSII 47 kDa protein</fullName>
    </alternativeName>
    <alternativeName>
        <fullName evidence="1">Protein CP-47</fullName>
    </alternativeName>
</protein>
<sequence length="514" mass="56857">MGLPWYRVHTAVINDPGRLLAVHLMHTALVLGWAGSMALYELAVFDPSDAVLNPMWRQGMFVLPFMTRLGVTHSWSGWTVTGEPWINEPGFLNAHFNFWSYEGVALMHIVLSGLFFLAAVWHWVYWDLDLFEDPRTGEPALDLPKIFGGHLFLLGFLCFNFGTFHLTGIFGPGMWVSDAYGLTGHIEHIAPEWGPAGFNPFNPGGVVAHHIAAGITLMIGGVFHLTARPPERLYTALRMGNVETALASAIAAVFGAAFVVAGTMWYGHVTTPIELFGPTRYQWDQGYFTQEIQRRVDSQLAEGASLSEAWSSIPEKLAFYDYVGNSPAKGGLFRVGAMDSGDGIAEEWLGHPVFQDGAGRALSVRRLPNFFENFPVILTDGDGVVRADIPFRRSESQYSFEQTGVTVSFYGGALDGQTFTNPSDVKKFARRAQLGEAFDFDTETLGSDGVFRTSTRGWFTFGHACFALLFFFGHIWHGARTLFRDVFAGIDADLGEQIEFGAFQKLGDLTTRKS</sequence>
<evidence type="ECO:0000255" key="1">
    <source>
        <dbReference type="HAMAP-Rule" id="MF_01495"/>
    </source>
</evidence>
<gene>
    <name evidence="1" type="primary">psbB</name>
</gene>
<name>PSBB_PROHO</name>
<dbReference type="EMBL" id="X59614">
    <property type="protein sequence ID" value="CAA42177.1"/>
    <property type="molecule type" value="Genomic_DNA"/>
</dbReference>
<dbReference type="PIR" id="S17739">
    <property type="entry name" value="QJMWPB"/>
</dbReference>
<dbReference type="RefSeq" id="WP_026099548.1">
    <property type="nucleotide sequence ID" value="NZ_JBEIME010000357.1"/>
</dbReference>
<dbReference type="SMR" id="P27200"/>
<dbReference type="GO" id="GO:0009523">
    <property type="term" value="C:photosystem II"/>
    <property type="evidence" value="ECO:0007669"/>
    <property type="project" value="UniProtKB-KW"/>
</dbReference>
<dbReference type="GO" id="GO:0031676">
    <property type="term" value="C:plasma membrane-derived thylakoid membrane"/>
    <property type="evidence" value="ECO:0007669"/>
    <property type="project" value="UniProtKB-SubCell"/>
</dbReference>
<dbReference type="GO" id="GO:0016168">
    <property type="term" value="F:chlorophyll binding"/>
    <property type="evidence" value="ECO:0007669"/>
    <property type="project" value="UniProtKB-UniRule"/>
</dbReference>
<dbReference type="GO" id="GO:0045156">
    <property type="term" value="F:electron transporter, transferring electrons within the cyclic electron transport pathway of photosynthesis activity"/>
    <property type="evidence" value="ECO:0007669"/>
    <property type="project" value="InterPro"/>
</dbReference>
<dbReference type="GO" id="GO:0009772">
    <property type="term" value="P:photosynthetic electron transport in photosystem II"/>
    <property type="evidence" value="ECO:0007669"/>
    <property type="project" value="InterPro"/>
</dbReference>
<dbReference type="Gene3D" id="3.10.680.10">
    <property type="entry name" value="Photosystem II CP47 reaction center protein"/>
    <property type="match status" value="1"/>
</dbReference>
<dbReference type="HAMAP" id="MF_01495">
    <property type="entry name" value="PSII_PsbB_CP47"/>
    <property type="match status" value="1"/>
</dbReference>
<dbReference type="InterPro" id="IPR000932">
    <property type="entry name" value="PS_antenna-like"/>
</dbReference>
<dbReference type="InterPro" id="IPR036001">
    <property type="entry name" value="PS_II_antenna-like_sf"/>
</dbReference>
<dbReference type="InterPro" id="IPR017486">
    <property type="entry name" value="PSII_PsbB"/>
</dbReference>
<dbReference type="NCBIfam" id="TIGR03039">
    <property type="entry name" value="PS_II_CP47"/>
    <property type="match status" value="1"/>
</dbReference>
<dbReference type="Pfam" id="PF00421">
    <property type="entry name" value="PSII"/>
    <property type="match status" value="1"/>
</dbReference>
<dbReference type="SUPFAM" id="SSF161077">
    <property type="entry name" value="Photosystem II antenna protein-like"/>
    <property type="match status" value="1"/>
</dbReference>